<organism>
    <name type="scientific">Alcanivorax borkumensis (strain ATCC 700651 / DSM 11573 / NCIMB 13689 / SK2)</name>
    <dbReference type="NCBI Taxonomy" id="393595"/>
    <lineage>
        <taxon>Bacteria</taxon>
        <taxon>Pseudomonadati</taxon>
        <taxon>Pseudomonadota</taxon>
        <taxon>Gammaproteobacteria</taxon>
        <taxon>Oceanospirillales</taxon>
        <taxon>Alcanivoracaceae</taxon>
        <taxon>Alcanivorax</taxon>
    </lineage>
</organism>
<reference key="1">
    <citation type="journal article" date="2006" name="Nat. Biotechnol.">
        <title>Genome sequence of the ubiquitous hydrocarbon-degrading marine bacterium Alcanivorax borkumensis.</title>
        <authorList>
            <person name="Schneiker S."/>
            <person name="Martins dos Santos V.A.P."/>
            <person name="Bartels D."/>
            <person name="Bekel T."/>
            <person name="Brecht M."/>
            <person name="Buhrmester J."/>
            <person name="Chernikova T.N."/>
            <person name="Denaro R."/>
            <person name="Ferrer M."/>
            <person name="Gertler C."/>
            <person name="Goesmann A."/>
            <person name="Golyshina O.V."/>
            <person name="Kaminski F."/>
            <person name="Khachane A.N."/>
            <person name="Lang S."/>
            <person name="Linke B."/>
            <person name="McHardy A.C."/>
            <person name="Meyer F."/>
            <person name="Nechitaylo T."/>
            <person name="Puehler A."/>
            <person name="Regenhardt D."/>
            <person name="Rupp O."/>
            <person name="Sabirova J.S."/>
            <person name="Selbitschka W."/>
            <person name="Yakimov M.M."/>
            <person name="Timmis K.N."/>
            <person name="Vorhoelter F.-J."/>
            <person name="Weidner S."/>
            <person name="Kaiser O."/>
            <person name="Golyshin P.N."/>
        </authorList>
    </citation>
    <scope>NUCLEOTIDE SEQUENCE [LARGE SCALE GENOMIC DNA]</scope>
    <source>
        <strain>ATCC 700651 / DSM 11573 / NCIMB 13689 / SK2</strain>
    </source>
</reference>
<feature type="chain" id="PRO_1000001087" description="Octanoyltransferase">
    <location>
        <begin position="1"/>
        <end position="246"/>
    </location>
</feature>
<feature type="domain" description="BPL/LPL catalytic" evidence="2">
    <location>
        <begin position="38"/>
        <end position="213"/>
    </location>
</feature>
<feature type="region of interest" description="Disordered" evidence="3">
    <location>
        <begin position="225"/>
        <end position="246"/>
    </location>
</feature>
<feature type="active site" description="Acyl-thioester intermediate" evidence="1">
    <location>
        <position position="175"/>
    </location>
</feature>
<feature type="binding site" evidence="1">
    <location>
        <begin position="77"/>
        <end position="84"/>
    </location>
    <ligand>
        <name>substrate</name>
    </ligand>
</feature>
<feature type="binding site" evidence="1">
    <location>
        <begin position="144"/>
        <end position="146"/>
    </location>
    <ligand>
        <name>substrate</name>
    </ligand>
</feature>
<feature type="binding site" evidence="1">
    <location>
        <begin position="157"/>
        <end position="159"/>
    </location>
    <ligand>
        <name>substrate</name>
    </ligand>
</feature>
<feature type="site" description="Lowers pKa of active site Cys" evidence="1">
    <location>
        <position position="141"/>
    </location>
</feature>
<accession>Q0VN37</accession>
<sequence length="246" mass="27262">MHSWPYTSPMDALIRYFPQVDYSSCWHAMRDLTDHRDAQQSDEFWVLEHPPIFTLGQAGKPEHVLNAGEIPVVNSDRGGQVTYHGPGQTVVYLMLDIKRLGLGSRGLVSAIEQGIIDFLASLGITAVNRDDAPGVYVQGAKIASLGLRIRRGATYHGLAINRDMDLSPWHRINPCGHVDQPMTTLKAQGVDLDRHSMEQQLVSFLAKRLGLTPRTAALPDWYNTRQENVTTGGDPGSALTQQPERL</sequence>
<proteinExistence type="inferred from homology"/>
<evidence type="ECO:0000255" key="1">
    <source>
        <dbReference type="HAMAP-Rule" id="MF_00013"/>
    </source>
</evidence>
<evidence type="ECO:0000255" key="2">
    <source>
        <dbReference type="PROSITE-ProRule" id="PRU01067"/>
    </source>
</evidence>
<evidence type="ECO:0000256" key="3">
    <source>
        <dbReference type="SAM" id="MobiDB-lite"/>
    </source>
</evidence>
<protein>
    <recommendedName>
        <fullName evidence="1">Octanoyltransferase</fullName>
        <ecNumber evidence="1">2.3.1.181</ecNumber>
    </recommendedName>
    <alternativeName>
        <fullName evidence="1">Lipoate-protein ligase B</fullName>
    </alternativeName>
    <alternativeName>
        <fullName evidence="1">Lipoyl/octanoyl transferase</fullName>
    </alternativeName>
    <alternativeName>
        <fullName evidence="1">Octanoyl-[acyl-carrier-protein]-protein N-octanoyltransferase</fullName>
    </alternativeName>
</protein>
<name>LIPB_ALCBS</name>
<comment type="function">
    <text evidence="1">Catalyzes the transfer of endogenously produced octanoic acid from octanoyl-acyl-carrier-protein onto the lipoyl domains of lipoate-dependent enzymes. Lipoyl-ACP can also act as a substrate although octanoyl-ACP is likely to be the physiological substrate.</text>
</comment>
<comment type="catalytic activity">
    <reaction evidence="1">
        <text>octanoyl-[ACP] + L-lysyl-[protein] = N(6)-octanoyl-L-lysyl-[protein] + holo-[ACP] + H(+)</text>
        <dbReference type="Rhea" id="RHEA:17665"/>
        <dbReference type="Rhea" id="RHEA-COMP:9636"/>
        <dbReference type="Rhea" id="RHEA-COMP:9685"/>
        <dbReference type="Rhea" id="RHEA-COMP:9752"/>
        <dbReference type="Rhea" id="RHEA-COMP:9928"/>
        <dbReference type="ChEBI" id="CHEBI:15378"/>
        <dbReference type="ChEBI" id="CHEBI:29969"/>
        <dbReference type="ChEBI" id="CHEBI:64479"/>
        <dbReference type="ChEBI" id="CHEBI:78463"/>
        <dbReference type="ChEBI" id="CHEBI:78809"/>
        <dbReference type="EC" id="2.3.1.181"/>
    </reaction>
</comment>
<comment type="pathway">
    <text evidence="1">Protein modification; protein lipoylation via endogenous pathway; protein N(6)-(lipoyl)lysine from octanoyl-[acyl-carrier-protein]: step 1/2.</text>
</comment>
<comment type="subcellular location">
    <subcellularLocation>
        <location evidence="1">Cytoplasm</location>
    </subcellularLocation>
</comment>
<comment type="miscellaneous">
    <text evidence="1">In the reaction, the free carboxyl group of octanoic acid is attached via an amide linkage to the epsilon-amino group of a specific lysine residue of lipoyl domains of lipoate-dependent enzymes.</text>
</comment>
<comment type="similarity">
    <text evidence="1">Belongs to the LipB family.</text>
</comment>
<gene>
    <name evidence="1" type="primary">lipB</name>
    <name type="ordered locus">ABO_1963</name>
</gene>
<keyword id="KW-0012">Acyltransferase</keyword>
<keyword id="KW-0963">Cytoplasm</keyword>
<keyword id="KW-1185">Reference proteome</keyword>
<keyword id="KW-0808">Transferase</keyword>
<dbReference type="EC" id="2.3.1.181" evidence="1"/>
<dbReference type="EMBL" id="AM286690">
    <property type="protein sequence ID" value="CAL17411.1"/>
    <property type="molecule type" value="Genomic_DNA"/>
</dbReference>
<dbReference type="SMR" id="Q0VN37"/>
<dbReference type="STRING" id="393595.ABO_1963"/>
<dbReference type="KEGG" id="abo:ABO_1963"/>
<dbReference type="eggNOG" id="COG0321">
    <property type="taxonomic scope" value="Bacteria"/>
</dbReference>
<dbReference type="HOGENOM" id="CLU_035168_3_1_6"/>
<dbReference type="OrthoDB" id="9787061at2"/>
<dbReference type="UniPathway" id="UPA00538">
    <property type="reaction ID" value="UER00592"/>
</dbReference>
<dbReference type="Proteomes" id="UP000008871">
    <property type="component" value="Chromosome"/>
</dbReference>
<dbReference type="GO" id="GO:0005737">
    <property type="term" value="C:cytoplasm"/>
    <property type="evidence" value="ECO:0007669"/>
    <property type="project" value="UniProtKB-SubCell"/>
</dbReference>
<dbReference type="GO" id="GO:0033819">
    <property type="term" value="F:lipoyl(octanoyl) transferase activity"/>
    <property type="evidence" value="ECO:0007669"/>
    <property type="project" value="UniProtKB-EC"/>
</dbReference>
<dbReference type="GO" id="GO:0036211">
    <property type="term" value="P:protein modification process"/>
    <property type="evidence" value="ECO:0007669"/>
    <property type="project" value="InterPro"/>
</dbReference>
<dbReference type="CDD" id="cd16444">
    <property type="entry name" value="LipB"/>
    <property type="match status" value="1"/>
</dbReference>
<dbReference type="FunFam" id="3.30.930.10:FF:000020">
    <property type="entry name" value="Octanoyltransferase"/>
    <property type="match status" value="1"/>
</dbReference>
<dbReference type="Gene3D" id="3.30.930.10">
    <property type="entry name" value="Bira Bifunctional Protein, Domain 2"/>
    <property type="match status" value="1"/>
</dbReference>
<dbReference type="HAMAP" id="MF_00013">
    <property type="entry name" value="LipB"/>
    <property type="match status" value="1"/>
</dbReference>
<dbReference type="InterPro" id="IPR045864">
    <property type="entry name" value="aa-tRNA-synth_II/BPL/LPL"/>
</dbReference>
<dbReference type="InterPro" id="IPR004143">
    <property type="entry name" value="BPL_LPL_catalytic"/>
</dbReference>
<dbReference type="InterPro" id="IPR000544">
    <property type="entry name" value="Octanoyltransferase"/>
</dbReference>
<dbReference type="InterPro" id="IPR020605">
    <property type="entry name" value="Octanoyltransferase_CS"/>
</dbReference>
<dbReference type="NCBIfam" id="TIGR00214">
    <property type="entry name" value="lipB"/>
    <property type="match status" value="1"/>
</dbReference>
<dbReference type="NCBIfam" id="NF010922">
    <property type="entry name" value="PRK14342.1"/>
    <property type="match status" value="1"/>
</dbReference>
<dbReference type="PANTHER" id="PTHR10993:SF7">
    <property type="entry name" value="LIPOYLTRANSFERASE 2, MITOCHONDRIAL-RELATED"/>
    <property type="match status" value="1"/>
</dbReference>
<dbReference type="PANTHER" id="PTHR10993">
    <property type="entry name" value="OCTANOYLTRANSFERASE"/>
    <property type="match status" value="1"/>
</dbReference>
<dbReference type="Pfam" id="PF21948">
    <property type="entry name" value="LplA-B_cat"/>
    <property type="match status" value="1"/>
</dbReference>
<dbReference type="SUPFAM" id="SSF55681">
    <property type="entry name" value="Class II aaRS and biotin synthetases"/>
    <property type="match status" value="1"/>
</dbReference>
<dbReference type="PROSITE" id="PS51733">
    <property type="entry name" value="BPL_LPL_CATALYTIC"/>
    <property type="match status" value="1"/>
</dbReference>
<dbReference type="PROSITE" id="PS01313">
    <property type="entry name" value="LIPB"/>
    <property type="match status" value="1"/>
</dbReference>